<protein>
    <recommendedName>
        <fullName evidence="1">Small ribosomal subunit protein bS21</fullName>
    </recommendedName>
    <alternativeName>
        <fullName evidence="2">30S ribosomal protein S21</fullName>
    </alternativeName>
</protein>
<name>RS21_PORG3</name>
<reference key="1">
    <citation type="journal article" date="2008" name="DNA Res.">
        <title>Determination of the genome sequence of Porphyromonas gingivalis strain ATCC 33277 and genomic comparison with strain W83 revealed extensive genome rearrangements in P. gingivalis.</title>
        <authorList>
            <person name="Naito M."/>
            <person name="Hirakawa H."/>
            <person name="Yamashita A."/>
            <person name="Ohara N."/>
            <person name="Shoji M."/>
            <person name="Yukitake H."/>
            <person name="Nakayama K."/>
            <person name="Toh H."/>
            <person name="Yoshimura F."/>
            <person name="Kuhara S."/>
            <person name="Hattori M."/>
            <person name="Hayashi T."/>
            <person name="Nakayama K."/>
        </authorList>
    </citation>
    <scope>NUCLEOTIDE SEQUENCE [LARGE SCALE GENOMIC DNA]</scope>
    <source>
        <strain>ATCC 33277 / DSM 20709 / CIP 103683 / JCM 12257 / NCTC 11834 / 2561</strain>
    </source>
</reference>
<dbReference type="EMBL" id="AP009380">
    <property type="protein sequence ID" value="BAG34099.1"/>
    <property type="molecule type" value="Genomic_DNA"/>
</dbReference>
<dbReference type="RefSeq" id="WP_012458384.1">
    <property type="nucleotide sequence ID" value="NC_010729.1"/>
</dbReference>
<dbReference type="SMR" id="B2RL54"/>
<dbReference type="GeneID" id="29256757"/>
<dbReference type="KEGG" id="pgn:PGN_1580"/>
<dbReference type="eggNOG" id="COG0828">
    <property type="taxonomic scope" value="Bacteria"/>
</dbReference>
<dbReference type="HOGENOM" id="CLU_159258_2_0_10"/>
<dbReference type="OrthoDB" id="598353at2"/>
<dbReference type="BioCyc" id="PGIN431947:G1G2V-1783-MONOMER"/>
<dbReference type="Proteomes" id="UP000008842">
    <property type="component" value="Chromosome"/>
</dbReference>
<dbReference type="GO" id="GO:1990904">
    <property type="term" value="C:ribonucleoprotein complex"/>
    <property type="evidence" value="ECO:0007669"/>
    <property type="project" value="UniProtKB-KW"/>
</dbReference>
<dbReference type="GO" id="GO:0005840">
    <property type="term" value="C:ribosome"/>
    <property type="evidence" value="ECO:0007669"/>
    <property type="project" value="UniProtKB-KW"/>
</dbReference>
<dbReference type="GO" id="GO:0003735">
    <property type="term" value="F:structural constituent of ribosome"/>
    <property type="evidence" value="ECO:0007669"/>
    <property type="project" value="InterPro"/>
</dbReference>
<dbReference type="GO" id="GO:0006412">
    <property type="term" value="P:translation"/>
    <property type="evidence" value="ECO:0007669"/>
    <property type="project" value="UniProtKB-UniRule"/>
</dbReference>
<dbReference type="Gene3D" id="1.20.5.1150">
    <property type="entry name" value="Ribosomal protein S8"/>
    <property type="match status" value="1"/>
</dbReference>
<dbReference type="HAMAP" id="MF_00358">
    <property type="entry name" value="Ribosomal_bS21"/>
    <property type="match status" value="1"/>
</dbReference>
<dbReference type="InterPro" id="IPR001911">
    <property type="entry name" value="Ribosomal_bS21"/>
</dbReference>
<dbReference type="InterPro" id="IPR018278">
    <property type="entry name" value="Ribosomal_bS21_CS"/>
</dbReference>
<dbReference type="InterPro" id="IPR038380">
    <property type="entry name" value="Ribosomal_bS21_sf"/>
</dbReference>
<dbReference type="NCBIfam" id="TIGR00030">
    <property type="entry name" value="S21p"/>
    <property type="match status" value="1"/>
</dbReference>
<dbReference type="Pfam" id="PF01165">
    <property type="entry name" value="Ribosomal_S21"/>
    <property type="match status" value="1"/>
</dbReference>
<dbReference type="PRINTS" id="PR00976">
    <property type="entry name" value="RIBOSOMALS21"/>
</dbReference>
<dbReference type="PROSITE" id="PS01181">
    <property type="entry name" value="RIBOSOMAL_S21"/>
    <property type="match status" value="1"/>
</dbReference>
<proteinExistence type="inferred from homology"/>
<organism>
    <name type="scientific">Porphyromonas gingivalis (strain ATCC 33277 / DSM 20709 / CIP 103683 / JCM 12257 / NCTC 11834 / 2561)</name>
    <dbReference type="NCBI Taxonomy" id="431947"/>
    <lineage>
        <taxon>Bacteria</taxon>
        <taxon>Pseudomonadati</taxon>
        <taxon>Bacteroidota</taxon>
        <taxon>Bacteroidia</taxon>
        <taxon>Bacteroidales</taxon>
        <taxon>Porphyromonadaceae</taxon>
        <taxon>Porphyromonas</taxon>
    </lineage>
</organism>
<gene>
    <name evidence="1" type="primary">rpsU</name>
    <name type="ordered locus">PGN_1580</name>
</gene>
<evidence type="ECO:0000255" key="1">
    <source>
        <dbReference type="HAMAP-Rule" id="MF_00358"/>
    </source>
</evidence>
<evidence type="ECO:0000305" key="2"/>
<sequence length="63" mass="7447">MIVVPVKEGENIERALKRFKRKFEKTGAVRELRARQAFEKPSVAKRKKMQKAIYMKQLQVAEE</sequence>
<comment type="similarity">
    <text evidence="1">Belongs to the bacterial ribosomal protein bS21 family.</text>
</comment>
<keyword id="KW-0687">Ribonucleoprotein</keyword>
<keyword id="KW-0689">Ribosomal protein</keyword>
<accession>B2RL54</accession>
<feature type="chain" id="PRO_1000120647" description="Small ribosomal subunit protein bS21">
    <location>
        <begin position="1"/>
        <end position="63"/>
    </location>
</feature>